<name>KDSA_SHEDO</name>
<sequence>MDQKMINLATEAGAIEIANDKPFVLFGGMNVLESRDLAMSIAEHYVEVTQKLGIPYVFKASFDKANRSSVNSYRGPGMEEGLKIFEEIKRTFNVPLITDVHEVHQCAPVAEVVDIIQLPAFLARQTDLVVAMAKTGAIINVKKPQFLAPHEMRHIVTKFNEAGNDKIILCERGSSFGYNNLVVDMLGMDDMKKTGYPVIFDATHALQRPGGRADSAGGRRAQATELARSGMALGIAGLFIEAHPDPDNAKCDGPCALPLHQLENYLKQMKAVDDLVKSFAPIDTSK</sequence>
<comment type="catalytic activity">
    <reaction evidence="1">
        <text>D-arabinose 5-phosphate + phosphoenolpyruvate + H2O = 3-deoxy-alpha-D-manno-2-octulosonate-8-phosphate + phosphate</text>
        <dbReference type="Rhea" id="RHEA:14053"/>
        <dbReference type="ChEBI" id="CHEBI:15377"/>
        <dbReference type="ChEBI" id="CHEBI:43474"/>
        <dbReference type="ChEBI" id="CHEBI:57693"/>
        <dbReference type="ChEBI" id="CHEBI:58702"/>
        <dbReference type="ChEBI" id="CHEBI:85985"/>
        <dbReference type="EC" id="2.5.1.55"/>
    </reaction>
</comment>
<comment type="pathway">
    <text evidence="1">Carbohydrate biosynthesis; 3-deoxy-D-manno-octulosonate biosynthesis; 3-deoxy-D-manno-octulosonate from D-ribulose 5-phosphate: step 2/3.</text>
</comment>
<comment type="pathway">
    <text evidence="1">Bacterial outer membrane biogenesis; lipopolysaccharide biosynthesis.</text>
</comment>
<comment type="subcellular location">
    <subcellularLocation>
        <location evidence="1">Cytoplasm</location>
    </subcellularLocation>
</comment>
<comment type="similarity">
    <text evidence="1">Belongs to the KdsA family.</text>
</comment>
<evidence type="ECO:0000255" key="1">
    <source>
        <dbReference type="HAMAP-Rule" id="MF_00056"/>
    </source>
</evidence>
<organism>
    <name type="scientific">Shewanella denitrificans (strain OS217 / ATCC BAA-1090 / DSM 15013)</name>
    <dbReference type="NCBI Taxonomy" id="318161"/>
    <lineage>
        <taxon>Bacteria</taxon>
        <taxon>Pseudomonadati</taxon>
        <taxon>Pseudomonadota</taxon>
        <taxon>Gammaproteobacteria</taxon>
        <taxon>Alteromonadales</taxon>
        <taxon>Shewanellaceae</taxon>
        <taxon>Shewanella</taxon>
    </lineage>
</organism>
<reference key="1">
    <citation type="submission" date="2006-03" db="EMBL/GenBank/DDBJ databases">
        <title>Complete sequence of Shewanella denitrificans OS217.</title>
        <authorList>
            <consortium name="US DOE Joint Genome Institute"/>
            <person name="Copeland A."/>
            <person name="Lucas S."/>
            <person name="Lapidus A."/>
            <person name="Barry K."/>
            <person name="Detter J.C."/>
            <person name="Glavina del Rio T."/>
            <person name="Hammon N."/>
            <person name="Israni S."/>
            <person name="Dalin E."/>
            <person name="Tice H."/>
            <person name="Pitluck S."/>
            <person name="Brettin T."/>
            <person name="Bruce D."/>
            <person name="Han C."/>
            <person name="Tapia R."/>
            <person name="Gilna P."/>
            <person name="Kiss H."/>
            <person name="Schmutz J."/>
            <person name="Larimer F."/>
            <person name="Land M."/>
            <person name="Hauser L."/>
            <person name="Kyrpides N."/>
            <person name="Lykidis A."/>
            <person name="Richardson P."/>
        </authorList>
    </citation>
    <scope>NUCLEOTIDE SEQUENCE [LARGE SCALE GENOMIC DNA]</scope>
    <source>
        <strain>OS217 / ATCC BAA-1090 / DSM 15013</strain>
    </source>
</reference>
<keyword id="KW-0963">Cytoplasm</keyword>
<keyword id="KW-0448">Lipopolysaccharide biosynthesis</keyword>
<keyword id="KW-1185">Reference proteome</keyword>
<keyword id="KW-0808">Transferase</keyword>
<proteinExistence type="inferred from homology"/>
<gene>
    <name evidence="1" type="primary">kdsA</name>
    <name type="ordered locus">Sden_0925</name>
</gene>
<protein>
    <recommendedName>
        <fullName evidence="1">2-dehydro-3-deoxyphosphooctonate aldolase</fullName>
        <ecNumber evidence="1">2.5.1.55</ecNumber>
    </recommendedName>
    <alternativeName>
        <fullName evidence="1">3-deoxy-D-manno-octulosonic acid 8-phosphate synthase</fullName>
    </alternativeName>
    <alternativeName>
        <fullName evidence="1">KDO-8-phosphate synthase</fullName>
        <shortName evidence="1">KDO 8-P synthase</shortName>
        <shortName evidence="1">KDOPS</shortName>
    </alternativeName>
    <alternativeName>
        <fullName evidence="1">Phospho-2-dehydro-3-deoxyoctonate aldolase</fullName>
    </alternativeName>
</protein>
<accession>Q12QR3</accession>
<dbReference type="EC" id="2.5.1.55" evidence="1"/>
<dbReference type="EMBL" id="CP000302">
    <property type="protein sequence ID" value="ABE54213.1"/>
    <property type="molecule type" value="Genomic_DNA"/>
</dbReference>
<dbReference type="SMR" id="Q12QR3"/>
<dbReference type="STRING" id="318161.Sden_0925"/>
<dbReference type="KEGG" id="sdn:Sden_0925"/>
<dbReference type="eggNOG" id="COG2877">
    <property type="taxonomic scope" value="Bacteria"/>
</dbReference>
<dbReference type="HOGENOM" id="CLU_036666_0_0_6"/>
<dbReference type="UniPathway" id="UPA00030"/>
<dbReference type="UniPathway" id="UPA00357">
    <property type="reaction ID" value="UER00474"/>
</dbReference>
<dbReference type="Proteomes" id="UP000001982">
    <property type="component" value="Chromosome"/>
</dbReference>
<dbReference type="GO" id="GO:0005737">
    <property type="term" value="C:cytoplasm"/>
    <property type="evidence" value="ECO:0007669"/>
    <property type="project" value="UniProtKB-SubCell"/>
</dbReference>
<dbReference type="GO" id="GO:0008676">
    <property type="term" value="F:3-deoxy-8-phosphooctulonate synthase activity"/>
    <property type="evidence" value="ECO:0007669"/>
    <property type="project" value="UniProtKB-UniRule"/>
</dbReference>
<dbReference type="GO" id="GO:0019294">
    <property type="term" value="P:keto-3-deoxy-D-manno-octulosonic acid biosynthetic process"/>
    <property type="evidence" value="ECO:0007669"/>
    <property type="project" value="UniProtKB-UniRule"/>
</dbReference>
<dbReference type="Gene3D" id="3.20.20.70">
    <property type="entry name" value="Aldolase class I"/>
    <property type="match status" value="1"/>
</dbReference>
<dbReference type="HAMAP" id="MF_00056">
    <property type="entry name" value="KDO8P_synth"/>
    <property type="match status" value="1"/>
</dbReference>
<dbReference type="InterPro" id="IPR013785">
    <property type="entry name" value="Aldolase_TIM"/>
</dbReference>
<dbReference type="InterPro" id="IPR006218">
    <property type="entry name" value="DAHP1/KDSA"/>
</dbReference>
<dbReference type="InterPro" id="IPR006269">
    <property type="entry name" value="KDO8P_synthase"/>
</dbReference>
<dbReference type="NCBIfam" id="TIGR01362">
    <property type="entry name" value="KDO8P_synth"/>
    <property type="match status" value="1"/>
</dbReference>
<dbReference type="NCBIfam" id="NF003543">
    <property type="entry name" value="PRK05198.1"/>
    <property type="match status" value="1"/>
</dbReference>
<dbReference type="NCBIfam" id="NF009109">
    <property type="entry name" value="PRK12457.1"/>
    <property type="match status" value="1"/>
</dbReference>
<dbReference type="PANTHER" id="PTHR21057">
    <property type="entry name" value="PHOSPHO-2-DEHYDRO-3-DEOXYHEPTONATE ALDOLASE"/>
    <property type="match status" value="1"/>
</dbReference>
<dbReference type="Pfam" id="PF00793">
    <property type="entry name" value="DAHP_synth_1"/>
    <property type="match status" value="1"/>
</dbReference>
<dbReference type="SUPFAM" id="SSF51569">
    <property type="entry name" value="Aldolase"/>
    <property type="match status" value="1"/>
</dbReference>
<feature type="chain" id="PRO_0000304484" description="2-dehydro-3-deoxyphosphooctonate aldolase">
    <location>
        <begin position="1"/>
        <end position="286"/>
    </location>
</feature>